<name>OXLA_VIPBB</name>
<accession>P0C2D7</accession>
<comment type="function">
    <text evidence="1 3">Catalyzes an oxidative deamination of predominantly hydrophobic and aromatic L-amino acids, thus producing hydrogen peroxide that may contribute to the diverse toxic effects of this enzyme (PubMed:16574513). Is highly active on L-Met, L-Leu, L-Phe, L-Ile, and L-Arg, moderately active on L-His, L-Trp, L-Asn, L-Glu, and L-Val, and weakly or not active on L-Gln, L-Lys, L-Asp, L-Ala, L-Tyr, L-Ser, L-Pro, L-Gly, L-Thr, and L-Cys (PubMed:16574513). Exhibits diverse biological activities, such as hemorrhage, hemolysis, edema, apoptosis of vascular endothelial cells or tumor cell lines, antibacterial and antiparasitic activities (By similarity). In addition, this protein has an ability to induce apoptosis in cultured HeLa and K562 cells, and inhibits ADP-induced platelet aggregation dose-dependently. Effects of snake L-amino oxidases on platelets are controversial, since they either induce aggregation or inhibit agonist-induced aggregation. These different effects are probably due to different experimental conditions.</text>
</comment>
<comment type="catalytic activity">
    <reaction evidence="3">
        <text>an L-alpha-amino acid + O2 + H2O = a 2-oxocarboxylate + H2O2 + NH4(+)</text>
        <dbReference type="Rhea" id="RHEA:13781"/>
        <dbReference type="ChEBI" id="CHEBI:15377"/>
        <dbReference type="ChEBI" id="CHEBI:15379"/>
        <dbReference type="ChEBI" id="CHEBI:16240"/>
        <dbReference type="ChEBI" id="CHEBI:28938"/>
        <dbReference type="ChEBI" id="CHEBI:35179"/>
        <dbReference type="ChEBI" id="CHEBI:59869"/>
        <dbReference type="EC" id="1.4.3.2"/>
    </reaction>
</comment>
<comment type="catalytic activity">
    <reaction evidence="3">
        <text>L-leucine + O2 + H2O = 4-methyl-2-oxopentanoate + H2O2 + NH4(+)</text>
        <dbReference type="Rhea" id="RHEA:60996"/>
        <dbReference type="ChEBI" id="CHEBI:15377"/>
        <dbReference type="ChEBI" id="CHEBI:15379"/>
        <dbReference type="ChEBI" id="CHEBI:16240"/>
        <dbReference type="ChEBI" id="CHEBI:17865"/>
        <dbReference type="ChEBI" id="CHEBI:28938"/>
        <dbReference type="ChEBI" id="CHEBI:57427"/>
    </reaction>
</comment>
<comment type="catalytic activity">
    <reaction evidence="3">
        <text>L-phenylalanine + O2 + H2O = 3-phenylpyruvate + H2O2 + NH4(+)</text>
        <dbReference type="Rhea" id="RHEA:61240"/>
        <dbReference type="ChEBI" id="CHEBI:15377"/>
        <dbReference type="ChEBI" id="CHEBI:15379"/>
        <dbReference type="ChEBI" id="CHEBI:16240"/>
        <dbReference type="ChEBI" id="CHEBI:18005"/>
        <dbReference type="ChEBI" id="CHEBI:28938"/>
        <dbReference type="ChEBI" id="CHEBI:58095"/>
    </reaction>
</comment>
<comment type="catalytic activity">
    <reaction evidence="3">
        <text>L-tryptophan + O2 + H2O = indole-3-pyruvate + H2O2 + NH4(+)</text>
        <dbReference type="Rhea" id="RHEA:61244"/>
        <dbReference type="ChEBI" id="CHEBI:15377"/>
        <dbReference type="ChEBI" id="CHEBI:15379"/>
        <dbReference type="ChEBI" id="CHEBI:16240"/>
        <dbReference type="ChEBI" id="CHEBI:17640"/>
        <dbReference type="ChEBI" id="CHEBI:28938"/>
        <dbReference type="ChEBI" id="CHEBI:57912"/>
    </reaction>
</comment>
<comment type="catalytic activity">
    <reaction evidence="3">
        <text>L-methionine + O2 + H2O = 4-methylsulfanyl-2-oxobutanoate + H2O2 + NH4(+)</text>
        <dbReference type="Rhea" id="RHEA:61236"/>
        <dbReference type="ChEBI" id="CHEBI:15377"/>
        <dbReference type="ChEBI" id="CHEBI:15379"/>
        <dbReference type="ChEBI" id="CHEBI:16240"/>
        <dbReference type="ChEBI" id="CHEBI:16723"/>
        <dbReference type="ChEBI" id="CHEBI:28938"/>
        <dbReference type="ChEBI" id="CHEBI:57844"/>
    </reaction>
</comment>
<comment type="catalytic activity">
    <reaction evidence="3">
        <text>L-isoleucine + O2 + H2O = (S)-3-methyl-2-oxopentanoate + H2O2 + NH4(+)</text>
        <dbReference type="Rhea" id="RHEA:61232"/>
        <dbReference type="ChEBI" id="CHEBI:15377"/>
        <dbReference type="ChEBI" id="CHEBI:15379"/>
        <dbReference type="ChEBI" id="CHEBI:16240"/>
        <dbReference type="ChEBI" id="CHEBI:28938"/>
        <dbReference type="ChEBI" id="CHEBI:35146"/>
        <dbReference type="ChEBI" id="CHEBI:58045"/>
    </reaction>
</comment>
<comment type="catalytic activity">
    <reaction evidence="3">
        <text>L-arginine + O2 + H2O = 5-guanidino-2-oxopentanoate + H2O2 + NH4(+)</text>
        <dbReference type="Rhea" id="RHEA:51404"/>
        <dbReference type="ChEBI" id="CHEBI:15377"/>
        <dbReference type="ChEBI" id="CHEBI:15379"/>
        <dbReference type="ChEBI" id="CHEBI:16240"/>
        <dbReference type="ChEBI" id="CHEBI:28938"/>
        <dbReference type="ChEBI" id="CHEBI:32682"/>
        <dbReference type="ChEBI" id="CHEBI:58489"/>
    </reaction>
</comment>
<comment type="catalytic activity">
    <reaction evidence="3">
        <text>L-histidine + O2 + H2O = 3-(imidazol-5-yl)pyruvate + H2O2 + NH4(+)</text>
        <dbReference type="Rhea" id="RHEA:61228"/>
        <dbReference type="ChEBI" id="CHEBI:15377"/>
        <dbReference type="ChEBI" id="CHEBI:15379"/>
        <dbReference type="ChEBI" id="CHEBI:16240"/>
        <dbReference type="ChEBI" id="CHEBI:28938"/>
        <dbReference type="ChEBI" id="CHEBI:57595"/>
        <dbReference type="ChEBI" id="CHEBI:58133"/>
    </reaction>
</comment>
<comment type="catalytic activity">
    <reaction evidence="3">
        <text>L-asparagine + O2 + H2O = 2-oxosuccinamate + H2O2 + NH4(+)</text>
        <dbReference type="Rhea" id="RHEA:61224"/>
        <dbReference type="ChEBI" id="CHEBI:15377"/>
        <dbReference type="ChEBI" id="CHEBI:15379"/>
        <dbReference type="ChEBI" id="CHEBI:16240"/>
        <dbReference type="ChEBI" id="CHEBI:28938"/>
        <dbReference type="ChEBI" id="CHEBI:57735"/>
        <dbReference type="ChEBI" id="CHEBI:58048"/>
    </reaction>
</comment>
<comment type="catalytic activity">
    <reaction evidence="3">
        <text>L-valine + O2 + H2O = 3-methyl-2-oxobutanoate + H2O2 + NH4(+)</text>
        <dbReference type="Rhea" id="RHEA:61252"/>
        <dbReference type="ChEBI" id="CHEBI:11851"/>
        <dbReference type="ChEBI" id="CHEBI:15377"/>
        <dbReference type="ChEBI" id="CHEBI:15379"/>
        <dbReference type="ChEBI" id="CHEBI:16240"/>
        <dbReference type="ChEBI" id="CHEBI:28938"/>
        <dbReference type="ChEBI" id="CHEBI:57762"/>
    </reaction>
</comment>
<comment type="catalytic activity">
    <reaction evidence="3">
        <text>L-glutamate + O2 + H2O = H2O2 + 2-oxoglutarate + NH4(+)</text>
        <dbReference type="Rhea" id="RHEA:20728"/>
        <dbReference type="ChEBI" id="CHEBI:15377"/>
        <dbReference type="ChEBI" id="CHEBI:15379"/>
        <dbReference type="ChEBI" id="CHEBI:16240"/>
        <dbReference type="ChEBI" id="CHEBI:16810"/>
        <dbReference type="ChEBI" id="CHEBI:28938"/>
        <dbReference type="ChEBI" id="CHEBI:29985"/>
    </reaction>
</comment>
<comment type="cofactor">
    <cofactor evidence="2">
        <name>FAD</name>
        <dbReference type="ChEBI" id="CHEBI:57692"/>
    </cofactor>
</comment>
<comment type="biophysicochemical properties">
    <kinetics>
        <KM evidence="3">0.361 mM for L-Leu</KM>
        <KM evidence="3">0.286 mM for L-Met</KM>
        <KM evidence="3">0.058 mM for L-Phe</KM>
    </kinetics>
</comment>
<comment type="subunit">
    <text evidence="3">Homodimer; non-covalently linked.</text>
</comment>
<comment type="subcellular location">
    <subcellularLocation>
        <location evidence="3">Secreted</location>
    </subcellularLocation>
</comment>
<comment type="tissue specificity">
    <text evidence="6">Expressed by the venom gland.</text>
</comment>
<comment type="PTM">
    <text evidence="2">N-glycosylated.</text>
</comment>
<comment type="similarity">
    <text evidence="5">Belongs to the flavin monoamine oxidase family. FIG1 subfamily.</text>
</comment>
<keyword id="KW-0044">Antibiotic</keyword>
<keyword id="KW-0929">Antimicrobial</keyword>
<keyword id="KW-0053">Apoptosis</keyword>
<keyword id="KW-0204">Cytolysis</keyword>
<keyword id="KW-0903">Direct protein sequencing</keyword>
<keyword id="KW-1015">Disulfide bond</keyword>
<keyword id="KW-0274">FAD</keyword>
<keyword id="KW-0285">Flavoprotein</keyword>
<keyword id="KW-0325">Glycoprotein</keyword>
<keyword id="KW-0354">Hemolysis</keyword>
<keyword id="KW-1199">Hemostasis impairing toxin</keyword>
<keyword id="KW-0560">Oxidoreductase</keyword>
<keyword id="KW-1201">Platelet aggregation inhibiting toxin</keyword>
<keyword id="KW-0964">Secreted</keyword>
<keyword id="KW-0800">Toxin</keyword>
<evidence type="ECO:0000250" key="1">
    <source>
        <dbReference type="UniProtKB" id="P0CC17"/>
    </source>
</evidence>
<evidence type="ECO:0000250" key="2">
    <source>
        <dbReference type="UniProtKB" id="P81382"/>
    </source>
</evidence>
<evidence type="ECO:0000269" key="3">
    <source>
    </source>
</evidence>
<evidence type="ECO:0000303" key="4">
    <source>
    </source>
</evidence>
<evidence type="ECO:0000305" key="5"/>
<evidence type="ECO:0000305" key="6">
    <source>
    </source>
</evidence>
<reference key="1">
    <citation type="journal article" date="2006" name="Biochim. Biophys. Acta">
        <title>Isolation and characterization of an apoptotic and platelet aggregation inhibiting L-amino acid oxidase from Vipera berus berus (common viper) venom.</title>
        <authorList>
            <person name="Samel M."/>
            <person name="Vija H."/>
            <person name="Ronnholm G."/>
            <person name="Siigur J."/>
            <person name="Kalkkinen N."/>
            <person name="Siigur E."/>
        </authorList>
    </citation>
    <scope>PROTEIN SEQUENCE</scope>
    <scope>IDENTIFICATION BY MASS SPECTROMETRY</scope>
    <scope>FUNCTION</scope>
    <scope>SUBUNIT</scope>
    <scope>CATALYTIC ACTIVITY</scope>
    <scope>BIOPHYSICOCHEMICAL PROPERTIES</scope>
    <scope>SUBSTRATE SPECIFICITY</scope>
    <scope>SUBCELLULAR LOCATION</scope>
    <source>
        <tissue>Venom</tissue>
    </source>
</reference>
<feature type="chain" id="PRO_0000273573" description="L-amino-acid oxidase">
    <location>
        <begin position="1"/>
        <end position="88" status="greater than"/>
    </location>
</feature>
<feature type="binding site" evidence="2">
    <location>
        <position position="74"/>
    </location>
    <ligand>
        <name>FAD</name>
        <dbReference type="ChEBI" id="CHEBI:57692"/>
    </ligand>
</feature>
<feature type="binding site" evidence="2">
    <location>
        <begin position="81"/>
        <end position="86"/>
    </location>
    <ligand>
        <name>FAD</name>
        <dbReference type="ChEBI" id="CHEBI:57692"/>
    </ligand>
</feature>
<feature type="binding site" evidence="2">
    <location>
        <begin position="81"/>
        <end position="82"/>
    </location>
    <ligand>
        <name>substrate</name>
    </ligand>
</feature>
<feature type="disulfide bond" evidence="2">
    <location>
        <begin position="10"/>
        <end status="unknown"/>
    </location>
</feature>
<feature type="non-consecutive residues" evidence="4">
    <location>
        <begin position="37"/>
        <end position="38"/>
    </location>
</feature>
<feature type="non-consecutive residues" evidence="4">
    <location>
        <begin position="44"/>
        <end position="45"/>
    </location>
</feature>
<feature type="non-consecutive residues" evidence="4">
    <location>
        <begin position="52"/>
        <end position="53"/>
    </location>
</feature>
<feature type="non-consecutive residues" evidence="4">
    <location>
        <begin position="61"/>
        <end position="62"/>
    </location>
</feature>
<feature type="non-consecutive residues" evidence="4">
    <location>
        <begin position="68"/>
        <end position="69"/>
    </location>
</feature>
<feature type="non-terminal residue" evidence="4">
    <location>
        <position position="88"/>
    </location>
</feature>
<dbReference type="EC" id="1.4.3.2" evidence="3"/>
<dbReference type="SMR" id="P0C2D7"/>
<dbReference type="SABIO-RK" id="P0C2D7"/>
<dbReference type="GO" id="GO:0005576">
    <property type="term" value="C:extracellular region"/>
    <property type="evidence" value="ECO:0007669"/>
    <property type="project" value="UniProtKB-SubCell"/>
</dbReference>
<dbReference type="GO" id="GO:0050025">
    <property type="term" value="F:L-glutamate oxidase activity"/>
    <property type="evidence" value="ECO:0007669"/>
    <property type="project" value="RHEA"/>
</dbReference>
<dbReference type="GO" id="GO:0106329">
    <property type="term" value="F:L-phenylalaine oxidase activity"/>
    <property type="evidence" value="ECO:0007669"/>
    <property type="project" value="RHEA"/>
</dbReference>
<dbReference type="GO" id="GO:0090729">
    <property type="term" value="F:toxin activity"/>
    <property type="evidence" value="ECO:0007669"/>
    <property type="project" value="UniProtKB-KW"/>
</dbReference>
<dbReference type="GO" id="GO:0006915">
    <property type="term" value="P:apoptotic process"/>
    <property type="evidence" value="ECO:0007669"/>
    <property type="project" value="UniProtKB-KW"/>
</dbReference>
<dbReference type="GO" id="GO:0042742">
    <property type="term" value="P:defense response to bacterium"/>
    <property type="evidence" value="ECO:0007669"/>
    <property type="project" value="UniProtKB-KW"/>
</dbReference>
<dbReference type="GO" id="GO:0031640">
    <property type="term" value="P:killing of cells of another organism"/>
    <property type="evidence" value="ECO:0007669"/>
    <property type="project" value="UniProtKB-KW"/>
</dbReference>
<dbReference type="Gene3D" id="3.90.660.10">
    <property type="match status" value="1"/>
</dbReference>
<proteinExistence type="evidence at protein level"/>
<organism>
    <name type="scientific">Vipera berus berus</name>
    <name type="common">Common viper</name>
    <dbReference type="NCBI Taxonomy" id="31156"/>
    <lineage>
        <taxon>Eukaryota</taxon>
        <taxon>Metazoa</taxon>
        <taxon>Chordata</taxon>
        <taxon>Craniata</taxon>
        <taxon>Vertebrata</taxon>
        <taxon>Euteleostomi</taxon>
        <taxon>Lepidosauria</taxon>
        <taxon>Squamata</taxon>
        <taxon>Bifurcata</taxon>
        <taxon>Unidentata</taxon>
        <taxon>Episquamata</taxon>
        <taxon>Toxicofera</taxon>
        <taxon>Serpentes</taxon>
        <taxon>Colubroidea</taxon>
        <taxon>Viperidae</taxon>
        <taxon>Viperinae</taxon>
        <taxon>Vipera</taxon>
    </lineage>
</organism>
<sequence length="88" mass="10295">ADDKNPLEECFREDDYEEFLEIAKNGLKKTSNPKHIVYPVKPSEQLYEESLRDQLPTSMHRYPSMIQKIFFAGEYTANAHGWIDSTIK</sequence>
<protein>
    <recommendedName>
        <fullName>L-amino-acid oxidase</fullName>
        <shortName evidence="4">LAAO</shortName>
        <shortName>LAO</shortName>
        <ecNumber evidence="3">1.4.3.2</ecNumber>
    </recommendedName>
</protein>